<reference key="1">
    <citation type="journal article" date="2001" name="Lancet">
        <title>Whole genome sequencing of meticillin-resistant Staphylococcus aureus.</title>
        <authorList>
            <person name="Kuroda M."/>
            <person name="Ohta T."/>
            <person name="Uchiyama I."/>
            <person name="Baba T."/>
            <person name="Yuzawa H."/>
            <person name="Kobayashi I."/>
            <person name="Cui L."/>
            <person name="Oguchi A."/>
            <person name="Aoki K."/>
            <person name="Nagai Y."/>
            <person name="Lian J.-Q."/>
            <person name="Ito T."/>
            <person name="Kanamori M."/>
            <person name="Matsumaru H."/>
            <person name="Maruyama A."/>
            <person name="Murakami H."/>
            <person name="Hosoyama A."/>
            <person name="Mizutani-Ui Y."/>
            <person name="Takahashi N.K."/>
            <person name="Sawano T."/>
            <person name="Inoue R."/>
            <person name="Kaito C."/>
            <person name="Sekimizu K."/>
            <person name="Hirakawa H."/>
            <person name="Kuhara S."/>
            <person name="Goto S."/>
            <person name="Yabuzaki J."/>
            <person name="Kanehisa M."/>
            <person name="Yamashita A."/>
            <person name="Oshima K."/>
            <person name="Furuya K."/>
            <person name="Yoshino C."/>
            <person name="Shiba T."/>
            <person name="Hattori M."/>
            <person name="Ogasawara N."/>
            <person name="Hayashi H."/>
            <person name="Hiramatsu K."/>
        </authorList>
    </citation>
    <scope>NUCLEOTIDE SEQUENCE [LARGE SCALE GENOMIC DNA]</scope>
    <source>
        <strain>N315</strain>
    </source>
</reference>
<dbReference type="EMBL" id="BA000018">
    <property type="protein sequence ID" value="BAB42473.1"/>
    <property type="molecule type" value="Genomic_DNA"/>
</dbReference>
<dbReference type="PIR" id="E89914">
    <property type="entry name" value="E89914"/>
</dbReference>
<dbReference type="RefSeq" id="WP_000548936.1">
    <property type="nucleotide sequence ID" value="NC_002745.2"/>
</dbReference>
<dbReference type="SMR" id="Q7A5Q7"/>
<dbReference type="EnsemblBacteria" id="BAB42473">
    <property type="protein sequence ID" value="BAB42473"/>
    <property type="gene ID" value="BAB42473"/>
</dbReference>
<dbReference type="KEGG" id="sau:SA1213"/>
<dbReference type="HOGENOM" id="CLU_028518_5_3_9"/>
<dbReference type="GO" id="GO:0005886">
    <property type="term" value="C:plasma membrane"/>
    <property type="evidence" value="ECO:0007669"/>
    <property type="project" value="UniProtKB-SubCell"/>
</dbReference>
<dbReference type="GO" id="GO:0015675">
    <property type="term" value="P:nickel cation transport"/>
    <property type="evidence" value="ECO:0007669"/>
    <property type="project" value="UniProtKB-KW"/>
</dbReference>
<dbReference type="GO" id="GO:0055085">
    <property type="term" value="P:transmembrane transport"/>
    <property type="evidence" value="ECO:0007669"/>
    <property type="project" value="InterPro"/>
</dbReference>
<dbReference type="CDD" id="cd06261">
    <property type="entry name" value="TM_PBP2"/>
    <property type="match status" value="1"/>
</dbReference>
<dbReference type="Gene3D" id="1.10.3720.10">
    <property type="entry name" value="MetI-like"/>
    <property type="match status" value="1"/>
</dbReference>
<dbReference type="InterPro" id="IPR053385">
    <property type="entry name" value="ABC_transport_permease"/>
</dbReference>
<dbReference type="InterPro" id="IPR050366">
    <property type="entry name" value="BP-dependent_transpt_permease"/>
</dbReference>
<dbReference type="InterPro" id="IPR000515">
    <property type="entry name" value="MetI-like"/>
</dbReference>
<dbReference type="InterPro" id="IPR035906">
    <property type="entry name" value="MetI-like_sf"/>
</dbReference>
<dbReference type="NCBIfam" id="NF045474">
    <property type="entry name" value="Opp2C"/>
    <property type="match status" value="1"/>
</dbReference>
<dbReference type="PANTHER" id="PTHR43386:SF1">
    <property type="entry name" value="D,D-DIPEPTIDE TRANSPORT SYSTEM PERMEASE PROTEIN DDPC-RELATED"/>
    <property type="match status" value="1"/>
</dbReference>
<dbReference type="PANTHER" id="PTHR43386">
    <property type="entry name" value="OLIGOPEPTIDE TRANSPORT SYSTEM PERMEASE PROTEIN APPC"/>
    <property type="match status" value="1"/>
</dbReference>
<dbReference type="Pfam" id="PF00528">
    <property type="entry name" value="BPD_transp_1"/>
    <property type="match status" value="1"/>
</dbReference>
<dbReference type="SUPFAM" id="SSF161098">
    <property type="entry name" value="MetI-like"/>
    <property type="match status" value="1"/>
</dbReference>
<dbReference type="PROSITE" id="PS50928">
    <property type="entry name" value="ABC_TM1"/>
    <property type="match status" value="1"/>
</dbReference>
<evidence type="ECO:0000250" key="1">
    <source>
        <dbReference type="UniProtKB" id="Q2FYQ6"/>
    </source>
</evidence>
<evidence type="ECO:0000255" key="2">
    <source>
        <dbReference type="PROSITE-ProRule" id="PRU00441"/>
    </source>
</evidence>
<evidence type="ECO:0000305" key="3"/>
<name>NIKC_STAAN</name>
<gene>
    <name evidence="1" type="primary">nikC</name>
    <name type="synonym">oppC2</name>
    <name type="ordered locus">SA1213</name>
</gene>
<keyword id="KW-1003">Cell membrane</keyword>
<keyword id="KW-0406">Ion transport</keyword>
<keyword id="KW-0472">Membrane</keyword>
<keyword id="KW-0533">Nickel</keyword>
<keyword id="KW-0921">Nickel transport</keyword>
<keyword id="KW-0812">Transmembrane</keyword>
<keyword id="KW-1133">Transmembrane helix</keyword>
<keyword id="KW-0813">Transport</keyword>
<comment type="function">
    <text evidence="1">Part of the ABC transporter complex NikABCDE (Opp2) involved in nickel import. Probably responsible for the translocation of the substrate across the membrane.</text>
</comment>
<comment type="subunit">
    <text evidence="1">The complex is composed of two ATP-binding proteins (NikD and NikE), two transmembrane proteins (NikB and NikC) and a solute-binding protein (NikA).</text>
</comment>
<comment type="subcellular location">
    <subcellularLocation>
        <location evidence="3">Cell membrane</location>
        <topology evidence="2">Multi-pass membrane protein</topology>
    </subcellularLocation>
</comment>
<comment type="similarity">
    <text evidence="3">Belongs to the binding-protein-dependent transport system permease family. OppBC subfamily.</text>
</comment>
<organism>
    <name type="scientific">Staphylococcus aureus (strain N315)</name>
    <dbReference type="NCBI Taxonomy" id="158879"/>
    <lineage>
        <taxon>Bacteria</taxon>
        <taxon>Bacillati</taxon>
        <taxon>Bacillota</taxon>
        <taxon>Bacilli</taxon>
        <taxon>Bacillales</taxon>
        <taxon>Staphylococcaceae</taxon>
        <taxon>Staphylococcus</taxon>
    </lineage>
</organism>
<protein>
    <recommendedName>
        <fullName evidence="1">Nickel import system permease protein NikC</fullName>
    </recommendedName>
</protein>
<proteinExistence type="inferred from homology"/>
<accession>Q7A5Q7</accession>
<feature type="chain" id="PRO_0000276789" description="Nickel import system permease protein NikC">
    <location>
        <begin position="1"/>
        <end position="276"/>
    </location>
</feature>
<feature type="transmembrane region" description="Helical" evidence="2">
    <location>
        <begin position="10"/>
        <end position="30"/>
    </location>
</feature>
<feature type="transmembrane region" description="Helical" evidence="2">
    <location>
        <begin position="73"/>
        <end position="93"/>
    </location>
</feature>
<feature type="transmembrane region" description="Helical" evidence="2">
    <location>
        <begin position="108"/>
        <end position="128"/>
    </location>
</feature>
<feature type="transmembrane region" description="Helical" evidence="2">
    <location>
        <begin position="186"/>
        <end position="206"/>
    </location>
</feature>
<feature type="transmembrane region" description="Helical" evidence="2">
    <location>
        <begin position="238"/>
        <end position="258"/>
    </location>
</feature>
<feature type="domain" description="ABC transmembrane type-1" evidence="2">
    <location>
        <begin position="69"/>
        <end position="258"/>
    </location>
</feature>
<sequence>MHKIFSKNNLIFFVFVAFIFVVIVLQFFVSSENATKVNLSQTFEPISWLHLLGTDDYGRDLFTRIIIGARSTLFVTVLTLIAIVVIGVTLGLFAGYKKGWIERLVLRFIDVGLSIPEFIIMIALASFFQPSLWNLVISITVIKWMNYTRLTRSIVNSEMNKPYIKMAQLFHVPTRTILIRHLTPKIIPAIIVLMVVDFGKIILYISSLSFIGLGAQPPTPEWGAMLQQGRDFISSHPIMLIAPASVIAITILIFNLTGDALRDRLLKQRGEYDESH</sequence>